<proteinExistence type="inferred from homology"/>
<feature type="initiator methionine" description="Removed" evidence="1">
    <location>
        <position position="1"/>
    </location>
</feature>
<feature type="chain" id="PRO_1000118882" description="Formamidopyrimidine-DNA glycosylase">
    <location>
        <begin position="2"/>
        <end position="287"/>
    </location>
</feature>
<feature type="zinc finger region" description="FPG-type" evidence="2">
    <location>
        <begin position="251"/>
        <end position="287"/>
    </location>
</feature>
<feature type="active site" description="Schiff-base intermediate with DNA" evidence="2">
    <location>
        <position position="2"/>
    </location>
</feature>
<feature type="active site" description="Proton donor" evidence="2">
    <location>
        <position position="3"/>
    </location>
</feature>
<feature type="active site" description="Proton donor; for beta-elimination activity" evidence="2">
    <location>
        <position position="58"/>
    </location>
</feature>
<feature type="active site" description="Proton donor; for delta-elimination activity" evidence="2">
    <location>
        <position position="277"/>
    </location>
</feature>
<feature type="binding site" evidence="2">
    <location>
        <position position="104"/>
    </location>
    <ligand>
        <name>DNA</name>
        <dbReference type="ChEBI" id="CHEBI:16991"/>
    </ligand>
</feature>
<feature type="binding site" evidence="2">
    <location>
        <position position="123"/>
    </location>
    <ligand>
        <name>DNA</name>
        <dbReference type="ChEBI" id="CHEBI:16991"/>
    </ligand>
</feature>
<feature type="binding site" evidence="2">
    <location>
        <position position="166"/>
    </location>
    <ligand>
        <name>DNA</name>
        <dbReference type="ChEBI" id="CHEBI:16991"/>
    </ligand>
</feature>
<dbReference type="EC" id="3.2.2.23" evidence="2"/>
<dbReference type="EC" id="4.2.99.18" evidence="2"/>
<dbReference type="EMBL" id="CP001340">
    <property type="protein sequence ID" value="ACL97287.1"/>
    <property type="molecule type" value="Genomic_DNA"/>
</dbReference>
<dbReference type="RefSeq" id="WP_015923346.1">
    <property type="nucleotide sequence ID" value="NC_011916.1"/>
</dbReference>
<dbReference type="RefSeq" id="YP_002519195.1">
    <property type="nucleotide sequence ID" value="NC_011916.1"/>
</dbReference>
<dbReference type="SMR" id="B8GVY4"/>
<dbReference type="GeneID" id="7332020"/>
<dbReference type="KEGG" id="ccs:CCNA_03822"/>
<dbReference type="PATRIC" id="fig|565050.3.peg.3727"/>
<dbReference type="HOGENOM" id="CLU_038423_1_1_5"/>
<dbReference type="OrthoDB" id="9800855at2"/>
<dbReference type="PhylomeDB" id="B8GVY4"/>
<dbReference type="Proteomes" id="UP000001364">
    <property type="component" value="Chromosome"/>
</dbReference>
<dbReference type="GO" id="GO:0034039">
    <property type="term" value="F:8-oxo-7,8-dihydroguanine DNA N-glycosylase activity"/>
    <property type="evidence" value="ECO:0007669"/>
    <property type="project" value="TreeGrafter"/>
</dbReference>
<dbReference type="GO" id="GO:0140078">
    <property type="term" value="F:class I DNA-(apurinic or apyrimidinic site) endonuclease activity"/>
    <property type="evidence" value="ECO:0007669"/>
    <property type="project" value="UniProtKB-EC"/>
</dbReference>
<dbReference type="GO" id="GO:0003684">
    <property type="term" value="F:damaged DNA binding"/>
    <property type="evidence" value="ECO:0007669"/>
    <property type="project" value="InterPro"/>
</dbReference>
<dbReference type="GO" id="GO:0008270">
    <property type="term" value="F:zinc ion binding"/>
    <property type="evidence" value="ECO:0007669"/>
    <property type="project" value="UniProtKB-UniRule"/>
</dbReference>
<dbReference type="GO" id="GO:0006284">
    <property type="term" value="P:base-excision repair"/>
    <property type="evidence" value="ECO:0007669"/>
    <property type="project" value="InterPro"/>
</dbReference>
<dbReference type="CDD" id="cd20335">
    <property type="entry name" value="BRcat_RBR"/>
    <property type="match status" value="1"/>
</dbReference>
<dbReference type="CDD" id="cd08966">
    <property type="entry name" value="EcFpg-like_N"/>
    <property type="match status" value="1"/>
</dbReference>
<dbReference type="FunFam" id="1.10.8.50:FF:000003">
    <property type="entry name" value="Formamidopyrimidine-DNA glycosylase"/>
    <property type="match status" value="1"/>
</dbReference>
<dbReference type="Gene3D" id="1.10.8.50">
    <property type="match status" value="1"/>
</dbReference>
<dbReference type="Gene3D" id="3.20.190.10">
    <property type="entry name" value="MutM-like, N-terminal"/>
    <property type="match status" value="1"/>
</dbReference>
<dbReference type="HAMAP" id="MF_00103">
    <property type="entry name" value="Fapy_DNA_glycosyl"/>
    <property type="match status" value="1"/>
</dbReference>
<dbReference type="InterPro" id="IPR015886">
    <property type="entry name" value="DNA_glyclase/AP_lyase_DNA-bd"/>
</dbReference>
<dbReference type="InterPro" id="IPR015887">
    <property type="entry name" value="DNA_glyclase_Znf_dom_DNA_BS"/>
</dbReference>
<dbReference type="InterPro" id="IPR020629">
    <property type="entry name" value="Formamido-pyr_DNA_Glyclase"/>
</dbReference>
<dbReference type="InterPro" id="IPR012319">
    <property type="entry name" value="FPG_cat"/>
</dbReference>
<dbReference type="InterPro" id="IPR035937">
    <property type="entry name" value="MutM-like_N-ter"/>
</dbReference>
<dbReference type="InterPro" id="IPR010979">
    <property type="entry name" value="Ribosomal_uS13-like_H2TH"/>
</dbReference>
<dbReference type="InterPro" id="IPR000214">
    <property type="entry name" value="Znf_DNA_glyclase/AP_lyase"/>
</dbReference>
<dbReference type="InterPro" id="IPR010663">
    <property type="entry name" value="Znf_FPG/IleRS"/>
</dbReference>
<dbReference type="NCBIfam" id="TIGR00577">
    <property type="entry name" value="fpg"/>
    <property type="match status" value="1"/>
</dbReference>
<dbReference type="NCBIfam" id="NF002211">
    <property type="entry name" value="PRK01103.1"/>
    <property type="match status" value="1"/>
</dbReference>
<dbReference type="PANTHER" id="PTHR22993">
    <property type="entry name" value="FORMAMIDOPYRIMIDINE-DNA GLYCOSYLASE"/>
    <property type="match status" value="1"/>
</dbReference>
<dbReference type="PANTHER" id="PTHR22993:SF9">
    <property type="entry name" value="FORMAMIDOPYRIMIDINE-DNA GLYCOSYLASE"/>
    <property type="match status" value="1"/>
</dbReference>
<dbReference type="Pfam" id="PF01149">
    <property type="entry name" value="Fapy_DNA_glyco"/>
    <property type="match status" value="1"/>
</dbReference>
<dbReference type="Pfam" id="PF06831">
    <property type="entry name" value="H2TH"/>
    <property type="match status" value="1"/>
</dbReference>
<dbReference type="Pfam" id="PF06827">
    <property type="entry name" value="zf-FPG_IleRS"/>
    <property type="match status" value="1"/>
</dbReference>
<dbReference type="SMART" id="SM00898">
    <property type="entry name" value="Fapy_DNA_glyco"/>
    <property type="match status" value="1"/>
</dbReference>
<dbReference type="SMART" id="SM01232">
    <property type="entry name" value="H2TH"/>
    <property type="match status" value="1"/>
</dbReference>
<dbReference type="SUPFAM" id="SSF57716">
    <property type="entry name" value="Glucocorticoid receptor-like (DNA-binding domain)"/>
    <property type="match status" value="1"/>
</dbReference>
<dbReference type="SUPFAM" id="SSF81624">
    <property type="entry name" value="N-terminal domain of MutM-like DNA repair proteins"/>
    <property type="match status" value="1"/>
</dbReference>
<dbReference type="SUPFAM" id="SSF46946">
    <property type="entry name" value="S13-like H2TH domain"/>
    <property type="match status" value="1"/>
</dbReference>
<dbReference type="PROSITE" id="PS51068">
    <property type="entry name" value="FPG_CAT"/>
    <property type="match status" value="1"/>
</dbReference>
<dbReference type="PROSITE" id="PS01242">
    <property type="entry name" value="ZF_FPG_1"/>
    <property type="match status" value="1"/>
</dbReference>
<dbReference type="PROSITE" id="PS51066">
    <property type="entry name" value="ZF_FPG_2"/>
    <property type="match status" value="1"/>
</dbReference>
<name>FPG_CAUVN</name>
<evidence type="ECO:0000250" key="1"/>
<evidence type="ECO:0000255" key="2">
    <source>
        <dbReference type="HAMAP-Rule" id="MF_00103"/>
    </source>
</evidence>
<keyword id="KW-0227">DNA damage</keyword>
<keyword id="KW-0234">DNA repair</keyword>
<keyword id="KW-0238">DNA-binding</keyword>
<keyword id="KW-0326">Glycosidase</keyword>
<keyword id="KW-0378">Hydrolase</keyword>
<keyword id="KW-0456">Lyase</keyword>
<keyword id="KW-0479">Metal-binding</keyword>
<keyword id="KW-0511">Multifunctional enzyme</keyword>
<keyword id="KW-1185">Reference proteome</keyword>
<keyword id="KW-0862">Zinc</keyword>
<keyword id="KW-0863">Zinc-finger</keyword>
<organism>
    <name type="scientific">Caulobacter vibrioides (strain NA1000 / CB15N)</name>
    <name type="common">Caulobacter crescentus</name>
    <dbReference type="NCBI Taxonomy" id="565050"/>
    <lineage>
        <taxon>Bacteria</taxon>
        <taxon>Pseudomonadati</taxon>
        <taxon>Pseudomonadota</taxon>
        <taxon>Alphaproteobacteria</taxon>
        <taxon>Caulobacterales</taxon>
        <taxon>Caulobacteraceae</taxon>
        <taxon>Caulobacter</taxon>
    </lineage>
</organism>
<gene>
    <name evidence="2" type="primary">mutM</name>
    <name evidence="2" type="synonym">fpg</name>
    <name type="ordered locus">CCNA_03822</name>
</gene>
<sequence>MPELPEVETVRRGLEPVLSGARLSSVRANRPDLRFPLPDGFVQRLTGARILRLDRRAKYILAPLDRGDTLVMHLGMTGRFEIAAPEGTVRPGDFAREVTPDDKHAHVVFQTEDGATVTYFDPRRFGFMDLIPTDRVSHHAWFAAMGPEPLGEGFDARTLEKAFANRKQGPKTLLLDQRTVAGLGNIYVCEALHRSGISPFKPSGNIAKKRLTPLTAAIKDVLAEAVEVGGSTLKDFAAADGALGYFQHRFRVYDREGEPCPTPACKGVIAREVQAGRSTFFCPVCQV</sequence>
<reference key="1">
    <citation type="journal article" date="2010" name="J. Bacteriol.">
        <title>The genetic basis of laboratory adaptation in Caulobacter crescentus.</title>
        <authorList>
            <person name="Marks M.E."/>
            <person name="Castro-Rojas C.M."/>
            <person name="Teiling C."/>
            <person name="Du L."/>
            <person name="Kapatral V."/>
            <person name="Walunas T.L."/>
            <person name="Crosson S."/>
        </authorList>
    </citation>
    <scope>NUCLEOTIDE SEQUENCE [LARGE SCALE GENOMIC DNA]</scope>
    <source>
        <strain>NA1000 / CB15N</strain>
    </source>
</reference>
<comment type="function">
    <text evidence="2">Involved in base excision repair of DNA damaged by oxidation or by mutagenic agents. Acts as a DNA glycosylase that recognizes and removes damaged bases. Has a preference for oxidized purines, such as 7,8-dihydro-8-oxoguanine (8-oxoG). Has AP (apurinic/apyrimidinic) lyase activity and introduces nicks in the DNA strand. Cleaves the DNA backbone by beta-delta elimination to generate a single-strand break at the site of the removed base with both 3'- and 5'-phosphates.</text>
</comment>
<comment type="catalytic activity">
    <reaction evidence="2">
        <text>Hydrolysis of DNA containing ring-opened 7-methylguanine residues, releasing 2,6-diamino-4-hydroxy-5-(N-methyl)formamidopyrimidine.</text>
        <dbReference type="EC" id="3.2.2.23"/>
    </reaction>
</comment>
<comment type="catalytic activity">
    <reaction evidence="2">
        <text>2'-deoxyribonucleotide-(2'-deoxyribose 5'-phosphate)-2'-deoxyribonucleotide-DNA = a 3'-end 2'-deoxyribonucleotide-(2,3-dehydro-2,3-deoxyribose 5'-phosphate)-DNA + a 5'-end 5'-phospho-2'-deoxyribonucleoside-DNA + H(+)</text>
        <dbReference type="Rhea" id="RHEA:66592"/>
        <dbReference type="Rhea" id="RHEA-COMP:13180"/>
        <dbReference type="Rhea" id="RHEA-COMP:16897"/>
        <dbReference type="Rhea" id="RHEA-COMP:17067"/>
        <dbReference type="ChEBI" id="CHEBI:15378"/>
        <dbReference type="ChEBI" id="CHEBI:136412"/>
        <dbReference type="ChEBI" id="CHEBI:157695"/>
        <dbReference type="ChEBI" id="CHEBI:167181"/>
        <dbReference type="EC" id="4.2.99.18"/>
    </reaction>
</comment>
<comment type="cofactor">
    <cofactor evidence="2">
        <name>Zn(2+)</name>
        <dbReference type="ChEBI" id="CHEBI:29105"/>
    </cofactor>
    <text evidence="2">Binds 1 zinc ion per subunit.</text>
</comment>
<comment type="subunit">
    <text evidence="2">Monomer.</text>
</comment>
<comment type="similarity">
    <text evidence="2">Belongs to the FPG family.</text>
</comment>
<protein>
    <recommendedName>
        <fullName evidence="2">Formamidopyrimidine-DNA glycosylase</fullName>
        <shortName evidence="2">Fapy-DNA glycosylase</shortName>
        <ecNumber evidence="2">3.2.2.23</ecNumber>
    </recommendedName>
    <alternativeName>
        <fullName evidence="2">DNA-(apurinic or apyrimidinic site) lyase MutM</fullName>
        <shortName evidence="2">AP lyase MutM</shortName>
        <ecNumber evidence="2">4.2.99.18</ecNumber>
    </alternativeName>
</protein>
<accession>B8GVY4</accession>